<comment type="function">
    <text evidence="1">Catalyzes the condensation reaction of fatty acid synthesis by the addition to an acyl acceptor of two carbons from malonyl-ACP. Catalyzes the first condensation reaction which initiates fatty acid synthesis and may therefore play a role in governing the total rate of fatty acid production. Possesses both acetoacetyl-ACP synthase and acetyl transacylase activities. Its substrate specificity determines the biosynthesis of branched-chain and/or straight-chain of fatty acids.</text>
</comment>
<comment type="catalytic activity">
    <reaction evidence="1">
        <text>malonyl-[ACP] + acetyl-CoA + H(+) = 3-oxobutanoyl-[ACP] + CO2 + CoA</text>
        <dbReference type="Rhea" id="RHEA:12080"/>
        <dbReference type="Rhea" id="RHEA-COMP:9623"/>
        <dbReference type="Rhea" id="RHEA-COMP:9625"/>
        <dbReference type="ChEBI" id="CHEBI:15378"/>
        <dbReference type="ChEBI" id="CHEBI:16526"/>
        <dbReference type="ChEBI" id="CHEBI:57287"/>
        <dbReference type="ChEBI" id="CHEBI:57288"/>
        <dbReference type="ChEBI" id="CHEBI:78449"/>
        <dbReference type="ChEBI" id="CHEBI:78450"/>
        <dbReference type="EC" id="2.3.1.180"/>
    </reaction>
</comment>
<comment type="pathway">
    <text evidence="1">Lipid metabolism; fatty acid biosynthesis.</text>
</comment>
<comment type="subunit">
    <text evidence="1">Homodimer.</text>
</comment>
<comment type="subcellular location">
    <subcellularLocation>
        <location evidence="1">Cytoplasm</location>
    </subcellularLocation>
</comment>
<comment type="domain">
    <text evidence="1">The last Arg residue of the ACP-binding site is essential for the weak association between ACP/AcpP and FabH.</text>
</comment>
<comment type="similarity">
    <text evidence="1">Belongs to the thiolase-like superfamily. FabH family.</text>
</comment>
<name>FABH_BART1</name>
<evidence type="ECO:0000255" key="1">
    <source>
        <dbReference type="HAMAP-Rule" id="MF_01815"/>
    </source>
</evidence>
<feature type="chain" id="PRO_1000187844" description="Beta-ketoacyl-[acyl-carrier-protein] synthase III">
    <location>
        <begin position="1"/>
        <end position="324"/>
    </location>
</feature>
<feature type="region of interest" description="ACP-binding" evidence="1">
    <location>
        <begin position="252"/>
        <end position="256"/>
    </location>
</feature>
<feature type="active site" evidence="1">
    <location>
        <position position="113"/>
    </location>
</feature>
<feature type="active site" evidence="1">
    <location>
        <position position="251"/>
    </location>
</feature>
<feature type="active site" evidence="1">
    <location>
        <position position="281"/>
    </location>
</feature>
<gene>
    <name evidence="1" type="primary">fabH</name>
    <name type="ordered locus">BT_1309</name>
</gene>
<organism>
    <name type="scientific">Bartonella tribocorum (strain CIP 105476 / IBS 506)</name>
    <dbReference type="NCBI Taxonomy" id="382640"/>
    <lineage>
        <taxon>Bacteria</taxon>
        <taxon>Pseudomonadati</taxon>
        <taxon>Pseudomonadota</taxon>
        <taxon>Alphaproteobacteria</taxon>
        <taxon>Hyphomicrobiales</taxon>
        <taxon>Bartonellaceae</taxon>
        <taxon>Bartonella</taxon>
    </lineage>
</organism>
<dbReference type="EC" id="2.3.1.180" evidence="1"/>
<dbReference type="EMBL" id="AM260525">
    <property type="protein sequence ID" value="CAK01673.1"/>
    <property type="molecule type" value="Genomic_DNA"/>
</dbReference>
<dbReference type="RefSeq" id="WP_012231855.1">
    <property type="nucleotide sequence ID" value="NC_010161.1"/>
</dbReference>
<dbReference type="SMR" id="A9IVB4"/>
<dbReference type="KEGG" id="btr:BT_1309"/>
<dbReference type="eggNOG" id="COG0332">
    <property type="taxonomic scope" value="Bacteria"/>
</dbReference>
<dbReference type="HOGENOM" id="CLU_039592_3_1_5"/>
<dbReference type="UniPathway" id="UPA00094"/>
<dbReference type="Proteomes" id="UP000001592">
    <property type="component" value="Chromosome"/>
</dbReference>
<dbReference type="GO" id="GO:0005737">
    <property type="term" value="C:cytoplasm"/>
    <property type="evidence" value="ECO:0007669"/>
    <property type="project" value="UniProtKB-SubCell"/>
</dbReference>
<dbReference type="GO" id="GO:0004315">
    <property type="term" value="F:3-oxoacyl-[acyl-carrier-protein] synthase activity"/>
    <property type="evidence" value="ECO:0007669"/>
    <property type="project" value="InterPro"/>
</dbReference>
<dbReference type="GO" id="GO:0033818">
    <property type="term" value="F:beta-ketoacyl-acyl-carrier-protein synthase III activity"/>
    <property type="evidence" value="ECO:0007669"/>
    <property type="project" value="UniProtKB-UniRule"/>
</dbReference>
<dbReference type="GO" id="GO:0006633">
    <property type="term" value="P:fatty acid biosynthetic process"/>
    <property type="evidence" value="ECO:0007669"/>
    <property type="project" value="UniProtKB-UniRule"/>
</dbReference>
<dbReference type="CDD" id="cd00830">
    <property type="entry name" value="KAS_III"/>
    <property type="match status" value="1"/>
</dbReference>
<dbReference type="FunFam" id="3.40.47.10:FF:000004">
    <property type="entry name" value="3-oxoacyl-[acyl-carrier-protein] synthase 3"/>
    <property type="match status" value="1"/>
</dbReference>
<dbReference type="Gene3D" id="3.40.47.10">
    <property type="match status" value="1"/>
</dbReference>
<dbReference type="HAMAP" id="MF_01815">
    <property type="entry name" value="FabH"/>
    <property type="match status" value="1"/>
</dbReference>
<dbReference type="InterPro" id="IPR013747">
    <property type="entry name" value="ACP_syn_III_C"/>
</dbReference>
<dbReference type="InterPro" id="IPR013751">
    <property type="entry name" value="ACP_syn_III_N"/>
</dbReference>
<dbReference type="InterPro" id="IPR004655">
    <property type="entry name" value="FabH"/>
</dbReference>
<dbReference type="InterPro" id="IPR016039">
    <property type="entry name" value="Thiolase-like"/>
</dbReference>
<dbReference type="NCBIfam" id="TIGR00747">
    <property type="entry name" value="fabH"/>
    <property type="match status" value="1"/>
</dbReference>
<dbReference type="NCBIfam" id="NF006829">
    <property type="entry name" value="PRK09352.1"/>
    <property type="match status" value="1"/>
</dbReference>
<dbReference type="PANTHER" id="PTHR43091">
    <property type="entry name" value="3-OXOACYL-[ACYL-CARRIER-PROTEIN] SYNTHASE"/>
    <property type="match status" value="1"/>
</dbReference>
<dbReference type="PANTHER" id="PTHR43091:SF1">
    <property type="entry name" value="BETA-KETOACYL-[ACYL-CARRIER-PROTEIN] SYNTHASE III, CHLOROPLASTIC"/>
    <property type="match status" value="1"/>
</dbReference>
<dbReference type="Pfam" id="PF08545">
    <property type="entry name" value="ACP_syn_III"/>
    <property type="match status" value="1"/>
</dbReference>
<dbReference type="Pfam" id="PF08541">
    <property type="entry name" value="ACP_syn_III_C"/>
    <property type="match status" value="1"/>
</dbReference>
<dbReference type="SUPFAM" id="SSF53901">
    <property type="entry name" value="Thiolase-like"/>
    <property type="match status" value="1"/>
</dbReference>
<proteinExistence type="inferred from homology"/>
<keyword id="KW-0012">Acyltransferase</keyword>
<keyword id="KW-0963">Cytoplasm</keyword>
<keyword id="KW-0275">Fatty acid biosynthesis</keyword>
<keyword id="KW-0276">Fatty acid metabolism</keyword>
<keyword id="KW-0444">Lipid biosynthesis</keyword>
<keyword id="KW-0443">Lipid metabolism</keyword>
<keyword id="KW-0511">Multifunctional enzyme</keyword>
<keyword id="KW-0808">Transferase</keyword>
<accession>A9IVB4</accession>
<sequence>MIRSIIRGVGSALPKRSLSNDELAKFVETSDAWIVQRTGIHQRYIANENETTVSLGVKAAQAALINAGLTIKDIDCIILATSTPNRTFPASAVEIQYALGMNHGFAFDIQAVCSGFIFALTTGDSYLRCGAAKRILVIGSDTFSRILDWEDRTTCVLFGDGAGAAVLEAEEIEGGIAFQRGILSAKLRSDGAYIDKLYVDGGPSTTQTTGYLRMEGREVFKYAVGMITDVVDDCFAAAGMDSSQLDWFVPHQANKRIIEASAKKLKISSDKVVITVDKHGNTSAASVPLALTTALCDGRIKRGDLIMLEAMGGGFTWGAILIRW</sequence>
<protein>
    <recommendedName>
        <fullName evidence="1">Beta-ketoacyl-[acyl-carrier-protein] synthase III</fullName>
        <shortName evidence="1">Beta-ketoacyl-ACP synthase III</shortName>
        <shortName evidence="1">KAS III</shortName>
        <ecNumber evidence="1">2.3.1.180</ecNumber>
    </recommendedName>
    <alternativeName>
        <fullName evidence="1">3-oxoacyl-[acyl-carrier-protein] synthase 3</fullName>
    </alternativeName>
    <alternativeName>
        <fullName evidence="1">3-oxoacyl-[acyl-carrier-protein] synthase III</fullName>
    </alternativeName>
</protein>
<reference key="1">
    <citation type="journal article" date="2007" name="Nat. Genet.">
        <title>Genomic analysis of Bartonella identifies type IV secretion systems as host adaptability factors.</title>
        <authorList>
            <person name="Saenz H.L."/>
            <person name="Engel P."/>
            <person name="Stoeckli M.C."/>
            <person name="Lanz C."/>
            <person name="Raddatz G."/>
            <person name="Vayssier-Taussat M."/>
            <person name="Birtles R."/>
            <person name="Schuster S.C."/>
            <person name="Dehio C."/>
        </authorList>
    </citation>
    <scope>NUCLEOTIDE SEQUENCE [LARGE SCALE GENOMIC DNA]</scope>
    <source>
        <strain>CIP 105476 / IBS 506</strain>
    </source>
</reference>